<gene>
    <name evidence="1" type="primary">rplB</name>
    <name type="ordered locus">AnaeK_1936</name>
</gene>
<keyword id="KW-0687">Ribonucleoprotein</keyword>
<keyword id="KW-0689">Ribosomal protein</keyword>
<keyword id="KW-0694">RNA-binding</keyword>
<keyword id="KW-0699">rRNA-binding</keyword>
<comment type="function">
    <text evidence="1">One of the primary rRNA binding proteins. Required for association of the 30S and 50S subunits to form the 70S ribosome, for tRNA binding and peptide bond formation. It has been suggested to have peptidyltransferase activity; this is somewhat controversial. Makes several contacts with the 16S rRNA in the 70S ribosome.</text>
</comment>
<comment type="subunit">
    <text evidence="1">Part of the 50S ribosomal subunit. Forms a bridge to the 30S subunit in the 70S ribosome.</text>
</comment>
<comment type="similarity">
    <text evidence="1">Belongs to the universal ribosomal protein uL2 family.</text>
</comment>
<dbReference type="EMBL" id="CP001131">
    <property type="protein sequence ID" value="ACG73164.1"/>
    <property type="molecule type" value="Genomic_DNA"/>
</dbReference>
<dbReference type="RefSeq" id="WP_012525976.1">
    <property type="nucleotide sequence ID" value="NC_011145.1"/>
</dbReference>
<dbReference type="SMR" id="B4UBA2"/>
<dbReference type="KEGG" id="ank:AnaeK_1936"/>
<dbReference type="HOGENOM" id="CLU_036235_2_1_7"/>
<dbReference type="OrthoDB" id="9778722at2"/>
<dbReference type="Proteomes" id="UP000001871">
    <property type="component" value="Chromosome"/>
</dbReference>
<dbReference type="GO" id="GO:0015934">
    <property type="term" value="C:large ribosomal subunit"/>
    <property type="evidence" value="ECO:0007669"/>
    <property type="project" value="InterPro"/>
</dbReference>
<dbReference type="GO" id="GO:0019843">
    <property type="term" value="F:rRNA binding"/>
    <property type="evidence" value="ECO:0007669"/>
    <property type="project" value="UniProtKB-UniRule"/>
</dbReference>
<dbReference type="GO" id="GO:0003735">
    <property type="term" value="F:structural constituent of ribosome"/>
    <property type="evidence" value="ECO:0007669"/>
    <property type="project" value="InterPro"/>
</dbReference>
<dbReference type="GO" id="GO:0016740">
    <property type="term" value="F:transferase activity"/>
    <property type="evidence" value="ECO:0007669"/>
    <property type="project" value="InterPro"/>
</dbReference>
<dbReference type="GO" id="GO:0002181">
    <property type="term" value="P:cytoplasmic translation"/>
    <property type="evidence" value="ECO:0007669"/>
    <property type="project" value="TreeGrafter"/>
</dbReference>
<dbReference type="FunFam" id="2.30.30.30:FF:000001">
    <property type="entry name" value="50S ribosomal protein L2"/>
    <property type="match status" value="1"/>
</dbReference>
<dbReference type="FunFam" id="2.40.50.140:FF:000003">
    <property type="entry name" value="50S ribosomal protein L2"/>
    <property type="match status" value="1"/>
</dbReference>
<dbReference type="FunFam" id="4.10.950.10:FF:000001">
    <property type="entry name" value="50S ribosomal protein L2"/>
    <property type="match status" value="1"/>
</dbReference>
<dbReference type="Gene3D" id="2.30.30.30">
    <property type="match status" value="1"/>
</dbReference>
<dbReference type="Gene3D" id="2.40.50.140">
    <property type="entry name" value="Nucleic acid-binding proteins"/>
    <property type="match status" value="1"/>
</dbReference>
<dbReference type="Gene3D" id="4.10.950.10">
    <property type="entry name" value="Ribosomal protein L2, domain 3"/>
    <property type="match status" value="1"/>
</dbReference>
<dbReference type="HAMAP" id="MF_01320_B">
    <property type="entry name" value="Ribosomal_uL2_B"/>
    <property type="match status" value="1"/>
</dbReference>
<dbReference type="InterPro" id="IPR012340">
    <property type="entry name" value="NA-bd_OB-fold"/>
</dbReference>
<dbReference type="InterPro" id="IPR014722">
    <property type="entry name" value="Rib_uL2_dom2"/>
</dbReference>
<dbReference type="InterPro" id="IPR002171">
    <property type="entry name" value="Ribosomal_uL2"/>
</dbReference>
<dbReference type="InterPro" id="IPR005880">
    <property type="entry name" value="Ribosomal_uL2_bac/org-type"/>
</dbReference>
<dbReference type="InterPro" id="IPR022669">
    <property type="entry name" value="Ribosomal_uL2_C"/>
</dbReference>
<dbReference type="InterPro" id="IPR014726">
    <property type="entry name" value="Ribosomal_uL2_dom3"/>
</dbReference>
<dbReference type="InterPro" id="IPR022666">
    <property type="entry name" value="Ribosomal_uL2_RNA-bd_dom"/>
</dbReference>
<dbReference type="InterPro" id="IPR008991">
    <property type="entry name" value="Translation_prot_SH3-like_sf"/>
</dbReference>
<dbReference type="NCBIfam" id="TIGR01171">
    <property type="entry name" value="rplB_bact"/>
    <property type="match status" value="1"/>
</dbReference>
<dbReference type="PANTHER" id="PTHR13691:SF5">
    <property type="entry name" value="LARGE RIBOSOMAL SUBUNIT PROTEIN UL2M"/>
    <property type="match status" value="1"/>
</dbReference>
<dbReference type="PANTHER" id="PTHR13691">
    <property type="entry name" value="RIBOSOMAL PROTEIN L2"/>
    <property type="match status" value="1"/>
</dbReference>
<dbReference type="Pfam" id="PF00181">
    <property type="entry name" value="Ribosomal_L2"/>
    <property type="match status" value="1"/>
</dbReference>
<dbReference type="Pfam" id="PF03947">
    <property type="entry name" value="Ribosomal_L2_C"/>
    <property type="match status" value="1"/>
</dbReference>
<dbReference type="PIRSF" id="PIRSF002158">
    <property type="entry name" value="Ribosomal_L2"/>
    <property type="match status" value="1"/>
</dbReference>
<dbReference type="SMART" id="SM01383">
    <property type="entry name" value="Ribosomal_L2"/>
    <property type="match status" value="1"/>
</dbReference>
<dbReference type="SMART" id="SM01382">
    <property type="entry name" value="Ribosomal_L2_C"/>
    <property type="match status" value="1"/>
</dbReference>
<dbReference type="SUPFAM" id="SSF50249">
    <property type="entry name" value="Nucleic acid-binding proteins"/>
    <property type="match status" value="1"/>
</dbReference>
<dbReference type="SUPFAM" id="SSF50104">
    <property type="entry name" value="Translation proteins SH3-like domain"/>
    <property type="match status" value="1"/>
</dbReference>
<organism>
    <name type="scientific">Anaeromyxobacter sp. (strain K)</name>
    <dbReference type="NCBI Taxonomy" id="447217"/>
    <lineage>
        <taxon>Bacteria</taxon>
        <taxon>Pseudomonadati</taxon>
        <taxon>Myxococcota</taxon>
        <taxon>Myxococcia</taxon>
        <taxon>Myxococcales</taxon>
        <taxon>Cystobacterineae</taxon>
        <taxon>Anaeromyxobacteraceae</taxon>
        <taxon>Anaeromyxobacter</taxon>
    </lineage>
</organism>
<accession>B4UBA2</accession>
<feature type="chain" id="PRO_1000141501" description="Large ribosomal subunit protein uL2">
    <location>
        <begin position="1"/>
        <end position="282"/>
    </location>
</feature>
<feature type="region of interest" description="Disordered" evidence="2">
    <location>
        <begin position="31"/>
        <end position="54"/>
    </location>
</feature>
<feature type="region of interest" description="Disordered" evidence="2">
    <location>
        <begin position="223"/>
        <end position="282"/>
    </location>
</feature>
<feature type="compositionally biased region" description="Basic residues" evidence="2">
    <location>
        <begin position="34"/>
        <end position="54"/>
    </location>
</feature>
<feature type="compositionally biased region" description="Basic residues" evidence="2">
    <location>
        <begin position="270"/>
        <end position="282"/>
    </location>
</feature>
<protein>
    <recommendedName>
        <fullName evidence="1">Large ribosomal subunit protein uL2</fullName>
    </recommendedName>
    <alternativeName>
        <fullName evidence="3">50S ribosomal protein L2</fullName>
    </alternativeName>
</protein>
<name>RL2_ANASK</name>
<proteinExistence type="inferred from homology"/>
<reference key="1">
    <citation type="submission" date="2008-08" db="EMBL/GenBank/DDBJ databases">
        <title>Complete sequence of Anaeromyxobacter sp. K.</title>
        <authorList>
            <consortium name="US DOE Joint Genome Institute"/>
            <person name="Lucas S."/>
            <person name="Copeland A."/>
            <person name="Lapidus A."/>
            <person name="Glavina del Rio T."/>
            <person name="Dalin E."/>
            <person name="Tice H."/>
            <person name="Bruce D."/>
            <person name="Goodwin L."/>
            <person name="Pitluck S."/>
            <person name="Saunders E."/>
            <person name="Brettin T."/>
            <person name="Detter J.C."/>
            <person name="Han C."/>
            <person name="Larimer F."/>
            <person name="Land M."/>
            <person name="Hauser L."/>
            <person name="Kyrpides N."/>
            <person name="Ovchinnikiva G."/>
            <person name="Beliaev A."/>
        </authorList>
    </citation>
    <scope>NUCLEOTIDE SEQUENCE [LARGE SCALE GENOMIC DNA]</scope>
    <source>
        <strain>K</strain>
    </source>
</reference>
<evidence type="ECO:0000255" key="1">
    <source>
        <dbReference type="HAMAP-Rule" id="MF_01320"/>
    </source>
</evidence>
<evidence type="ECO:0000256" key="2">
    <source>
        <dbReference type="SAM" id="MobiDB-lite"/>
    </source>
</evidence>
<evidence type="ECO:0000305" key="3"/>
<sequence>MALKEYKPTSPARRHMTVADFAEITKAKPEKRLTKPVRKSGGRNAHGKVTTRHIGGGHKRRYRLIDWRRDKDGVPAKVAAIEYDPNRTARIALLHYLDGEKRYILAPVGVAVGDTLLSGADVDIRPGNALPVRTIPLGTVIHNVETAPGSGAKMIRTAGSFGQLMAKEGGYAQIRLPSGEVRKVLQDCKATIGQLGNVESSSVRVGKAGKSRWLGIRPTVRGLAMNPVDHPHGGGEGKSGQGNPHPVSPWGQKTKGLKTRNNRRTDKFIVTRRRPGVRNTQR</sequence>